<sequence>MPAHAYLCAMDAHAPLIDPFARPITYLRVSVTDRCDFRCTYCMAEHMQFLPKRDLLTLEELDRLCSAFVGLGVRKLRVTGGEPLVRRNIMEFFRAMSRHLGAGLDELTLTTNGSQLARFATELADCGVRRVNVSLDTLDEDRFARITRWGRLPQVLQGIEAAKAAGMRVKINTVALKGFNEDELFRLVGWCADQGHDLTFIEVMPMGEMGEEERLDQYWALSDLRDRLGERFTLTPLAERTGGPARYVRLDETGQKIGFITPLTHNFCESCNRVRITCTGELFMCLGQEDRADLRAPLRAGAEDAPLRAAIRDAIARKPKGHDFDYSRRHVAGQVSRYMSHTGG</sequence>
<keyword id="KW-0004">4Fe-4S</keyword>
<keyword id="KW-0342">GTP-binding</keyword>
<keyword id="KW-0408">Iron</keyword>
<keyword id="KW-0411">Iron-sulfur</keyword>
<keyword id="KW-0456">Lyase</keyword>
<keyword id="KW-0479">Metal-binding</keyword>
<keyword id="KW-0501">Molybdenum cofactor biosynthesis</keyword>
<keyword id="KW-0547">Nucleotide-binding</keyword>
<keyword id="KW-1185">Reference proteome</keyword>
<keyword id="KW-0949">S-adenosyl-L-methionine</keyword>
<feature type="chain" id="PRO_1000054209" description="GTP 3',8-cyclase">
    <location>
        <begin position="1"/>
        <end position="344"/>
    </location>
</feature>
<feature type="domain" description="Radical SAM core" evidence="2">
    <location>
        <begin position="19"/>
        <end position="244"/>
    </location>
</feature>
<feature type="binding site" evidence="1">
    <location>
        <position position="28"/>
    </location>
    <ligand>
        <name>GTP</name>
        <dbReference type="ChEBI" id="CHEBI:37565"/>
    </ligand>
</feature>
<feature type="binding site" evidence="1">
    <location>
        <position position="35"/>
    </location>
    <ligand>
        <name>[4Fe-4S] cluster</name>
        <dbReference type="ChEBI" id="CHEBI:49883"/>
        <label>1</label>
        <note>4Fe-4S-S-AdoMet</note>
    </ligand>
</feature>
<feature type="binding site" evidence="1">
    <location>
        <position position="39"/>
    </location>
    <ligand>
        <name>[4Fe-4S] cluster</name>
        <dbReference type="ChEBI" id="CHEBI:49883"/>
        <label>1</label>
        <note>4Fe-4S-S-AdoMet</note>
    </ligand>
</feature>
<feature type="binding site" evidence="1">
    <location>
        <position position="41"/>
    </location>
    <ligand>
        <name>S-adenosyl-L-methionine</name>
        <dbReference type="ChEBI" id="CHEBI:59789"/>
    </ligand>
</feature>
<feature type="binding site" evidence="1">
    <location>
        <position position="42"/>
    </location>
    <ligand>
        <name>[4Fe-4S] cluster</name>
        <dbReference type="ChEBI" id="CHEBI:49883"/>
        <label>1</label>
        <note>4Fe-4S-S-AdoMet</note>
    </ligand>
</feature>
<feature type="binding site" evidence="1">
    <location>
        <position position="77"/>
    </location>
    <ligand>
        <name>GTP</name>
        <dbReference type="ChEBI" id="CHEBI:37565"/>
    </ligand>
</feature>
<feature type="binding site" evidence="1">
    <location>
        <position position="81"/>
    </location>
    <ligand>
        <name>S-adenosyl-L-methionine</name>
        <dbReference type="ChEBI" id="CHEBI:59789"/>
    </ligand>
</feature>
<feature type="binding site" evidence="1">
    <location>
        <position position="110"/>
    </location>
    <ligand>
        <name>GTP</name>
        <dbReference type="ChEBI" id="CHEBI:37565"/>
    </ligand>
</feature>
<feature type="binding site" evidence="1">
    <location>
        <position position="134"/>
    </location>
    <ligand>
        <name>S-adenosyl-L-methionine</name>
        <dbReference type="ChEBI" id="CHEBI:59789"/>
    </ligand>
</feature>
<feature type="binding site" evidence="1">
    <location>
        <position position="170"/>
    </location>
    <ligand>
        <name>GTP</name>
        <dbReference type="ChEBI" id="CHEBI:37565"/>
    </ligand>
</feature>
<feature type="binding site" evidence="1">
    <location>
        <position position="204"/>
    </location>
    <ligand>
        <name>S-adenosyl-L-methionine</name>
        <dbReference type="ChEBI" id="CHEBI:59789"/>
    </ligand>
</feature>
<feature type="binding site" evidence="1">
    <location>
        <position position="268"/>
    </location>
    <ligand>
        <name>[4Fe-4S] cluster</name>
        <dbReference type="ChEBI" id="CHEBI:49883"/>
        <label>2</label>
        <note>4Fe-4S-substrate</note>
    </ligand>
</feature>
<feature type="binding site" evidence="1">
    <location>
        <position position="271"/>
    </location>
    <ligand>
        <name>[4Fe-4S] cluster</name>
        <dbReference type="ChEBI" id="CHEBI:49883"/>
        <label>2</label>
        <note>4Fe-4S-substrate</note>
    </ligand>
</feature>
<feature type="binding site" evidence="1">
    <location>
        <begin position="273"/>
        <end position="275"/>
    </location>
    <ligand>
        <name>GTP</name>
        <dbReference type="ChEBI" id="CHEBI:37565"/>
    </ligand>
</feature>
<feature type="binding site" evidence="1">
    <location>
        <position position="285"/>
    </location>
    <ligand>
        <name>[4Fe-4S] cluster</name>
        <dbReference type="ChEBI" id="CHEBI:49883"/>
        <label>2</label>
        <note>4Fe-4S-substrate</note>
    </ligand>
</feature>
<evidence type="ECO:0000255" key="1">
    <source>
        <dbReference type="HAMAP-Rule" id="MF_01225"/>
    </source>
</evidence>
<evidence type="ECO:0000255" key="2">
    <source>
        <dbReference type="PROSITE-ProRule" id="PRU01266"/>
    </source>
</evidence>
<gene>
    <name evidence="1" type="primary">moaA</name>
    <name type="ordered locus">Pden_2254</name>
</gene>
<organism>
    <name type="scientific">Paracoccus denitrificans (strain Pd 1222)</name>
    <dbReference type="NCBI Taxonomy" id="318586"/>
    <lineage>
        <taxon>Bacteria</taxon>
        <taxon>Pseudomonadati</taxon>
        <taxon>Pseudomonadota</taxon>
        <taxon>Alphaproteobacteria</taxon>
        <taxon>Rhodobacterales</taxon>
        <taxon>Paracoccaceae</taxon>
        <taxon>Paracoccus</taxon>
    </lineage>
</organism>
<accession>A1B4A2</accession>
<protein>
    <recommendedName>
        <fullName evidence="1">GTP 3',8-cyclase</fullName>
        <ecNumber evidence="1">4.1.99.22</ecNumber>
    </recommendedName>
    <alternativeName>
        <fullName evidence="1">Molybdenum cofactor biosynthesis protein A</fullName>
    </alternativeName>
</protein>
<name>MOAA_PARDP</name>
<proteinExistence type="inferred from homology"/>
<comment type="function">
    <text evidence="1">Catalyzes the cyclization of GTP to (8S)-3',8-cyclo-7,8-dihydroguanosine 5'-triphosphate.</text>
</comment>
<comment type="catalytic activity">
    <reaction evidence="1">
        <text>GTP + AH2 + S-adenosyl-L-methionine = (8S)-3',8-cyclo-7,8-dihydroguanosine 5'-triphosphate + 5'-deoxyadenosine + L-methionine + A + H(+)</text>
        <dbReference type="Rhea" id="RHEA:49576"/>
        <dbReference type="ChEBI" id="CHEBI:13193"/>
        <dbReference type="ChEBI" id="CHEBI:15378"/>
        <dbReference type="ChEBI" id="CHEBI:17319"/>
        <dbReference type="ChEBI" id="CHEBI:17499"/>
        <dbReference type="ChEBI" id="CHEBI:37565"/>
        <dbReference type="ChEBI" id="CHEBI:57844"/>
        <dbReference type="ChEBI" id="CHEBI:59789"/>
        <dbReference type="ChEBI" id="CHEBI:131766"/>
        <dbReference type="EC" id="4.1.99.22"/>
    </reaction>
</comment>
<comment type="cofactor">
    <cofactor evidence="1">
        <name>[4Fe-4S] cluster</name>
        <dbReference type="ChEBI" id="CHEBI:49883"/>
    </cofactor>
    <text evidence="1">Binds 2 [4Fe-4S] clusters. Binds 1 [4Fe-4S] cluster coordinated with 3 cysteines and an exchangeable S-adenosyl-L-methionine and 1 [4Fe-4S] cluster coordinated with 3 cysteines and the GTP-derived substrate.</text>
</comment>
<comment type="pathway">
    <text evidence="1">Cofactor biosynthesis; molybdopterin biosynthesis.</text>
</comment>
<comment type="subunit">
    <text evidence="1">Monomer and homodimer.</text>
</comment>
<comment type="similarity">
    <text evidence="1">Belongs to the radical SAM superfamily. MoaA family.</text>
</comment>
<dbReference type="EC" id="4.1.99.22" evidence="1"/>
<dbReference type="EMBL" id="CP000489">
    <property type="protein sequence ID" value="ABL70346.1"/>
    <property type="molecule type" value="Genomic_DNA"/>
</dbReference>
<dbReference type="RefSeq" id="WP_011748540.1">
    <property type="nucleotide sequence ID" value="NC_008686.1"/>
</dbReference>
<dbReference type="SMR" id="A1B4A2"/>
<dbReference type="STRING" id="318586.Pden_2254"/>
<dbReference type="EnsemblBacteria" id="ABL70346">
    <property type="protein sequence ID" value="ABL70346"/>
    <property type="gene ID" value="Pden_2254"/>
</dbReference>
<dbReference type="GeneID" id="93450653"/>
<dbReference type="KEGG" id="pde:Pden_2254"/>
<dbReference type="eggNOG" id="COG2896">
    <property type="taxonomic scope" value="Bacteria"/>
</dbReference>
<dbReference type="HOGENOM" id="CLU_009273_0_1_5"/>
<dbReference type="OrthoDB" id="9763993at2"/>
<dbReference type="UniPathway" id="UPA00344"/>
<dbReference type="Proteomes" id="UP000000361">
    <property type="component" value="Chromosome 1"/>
</dbReference>
<dbReference type="GO" id="GO:0051539">
    <property type="term" value="F:4 iron, 4 sulfur cluster binding"/>
    <property type="evidence" value="ECO:0007669"/>
    <property type="project" value="UniProtKB-UniRule"/>
</dbReference>
<dbReference type="GO" id="GO:0061799">
    <property type="term" value="F:cyclic pyranopterin monophosphate synthase activity"/>
    <property type="evidence" value="ECO:0007669"/>
    <property type="project" value="TreeGrafter"/>
</dbReference>
<dbReference type="GO" id="GO:0061798">
    <property type="term" value="F:GTP 3',8'-cyclase activity"/>
    <property type="evidence" value="ECO:0007669"/>
    <property type="project" value="UniProtKB-UniRule"/>
</dbReference>
<dbReference type="GO" id="GO:0005525">
    <property type="term" value="F:GTP binding"/>
    <property type="evidence" value="ECO:0007669"/>
    <property type="project" value="UniProtKB-UniRule"/>
</dbReference>
<dbReference type="GO" id="GO:0046872">
    <property type="term" value="F:metal ion binding"/>
    <property type="evidence" value="ECO:0007669"/>
    <property type="project" value="UniProtKB-KW"/>
</dbReference>
<dbReference type="GO" id="GO:1904047">
    <property type="term" value="F:S-adenosyl-L-methionine binding"/>
    <property type="evidence" value="ECO:0007669"/>
    <property type="project" value="UniProtKB-UniRule"/>
</dbReference>
<dbReference type="GO" id="GO:0006777">
    <property type="term" value="P:Mo-molybdopterin cofactor biosynthetic process"/>
    <property type="evidence" value="ECO:0007669"/>
    <property type="project" value="UniProtKB-UniRule"/>
</dbReference>
<dbReference type="CDD" id="cd01335">
    <property type="entry name" value="Radical_SAM"/>
    <property type="match status" value="1"/>
</dbReference>
<dbReference type="CDD" id="cd21117">
    <property type="entry name" value="Twitch_MoaA"/>
    <property type="match status" value="1"/>
</dbReference>
<dbReference type="FunFam" id="3.20.20.70:FF:000057">
    <property type="entry name" value="GTP 3',8-cyclase"/>
    <property type="match status" value="1"/>
</dbReference>
<dbReference type="Gene3D" id="3.20.20.70">
    <property type="entry name" value="Aldolase class I"/>
    <property type="match status" value="1"/>
</dbReference>
<dbReference type="HAMAP" id="MF_01225_B">
    <property type="entry name" value="MoaA_B"/>
    <property type="match status" value="1"/>
</dbReference>
<dbReference type="InterPro" id="IPR013785">
    <property type="entry name" value="Aldolase_TIM"/>
</dbReference>
<dbReference type="InterPro" id="IPR006638">
    <property type="entry name" value="Elp3/MiaA/NifB-like_rSAM"/>
</dbReference>
<dbReference type="InterPro" id="IPR013483">
    <property type="entry name" value="MoaA"/>
</dbReference>
<dbReference type="InterPro" id="IPR000385">
    <property type="entry name" value="MoaA_NifB_PqqE_Fe-S-bd_CS"/>
</dbReference>
<dbReference type="InterPro" id="IPR010505">
    <property type="entry name" value="MoaA_twitch"/>
</dbReference>
<dbReference type="InterPro" id="IPR050105">
    <property type="entry name" value="MoCo_biosynth_MoaA/MoaC"/>
</dbReference>
<dbReference type="InterPro" id="IPR007197">
    <property type="entry name" value="rSAM"/>
</dbReference>
<dbReference type="NCBIfam" id="TIGR02666">
    <property type="entry name" value="moaA"/>
    <property type="match status" value="1"/>
</dbReference>
<dbReference type="PANTHER" id="PTHR22960:SF0">
    <property type="entry name" value="MOLYBDENUM COFACTOR BIOSYNTHESIS PROTEIN 1"/>
    <property type="match status" value="1"/>
</dbReference>
<dbReference type="PANTHER" id="PTHR22960">
    <property type="entry name" value="MOLYBDOPTERIN COFACTOR SYNTHESIS PROTEIN A"/>
    <property type="match status" value="1"/>
</dbReference>
<dbReference type="Pfam" id="PF13353">
    <property type="entry name" value="Fer4_12"/>
    <property type="match status" value="1"/>
</dbReference>
<dbReference type="Pfam" id="PF06463">
    <property type="entry name" value="Mob_synth_C"/>
    <property type="match status" value="1"/>
</dbReference>
<dbReference type="Pfam" id="PF04055">
    <property type="entry name" value="Radical_SAM"/>
    <property type="match status" value="1"/>
</dbReference>
<dbReference type="SFLD" id="SFLDG01383">
    <property type="entry name" value="cyclic_pyranopterin_phosphate"/>
    <property type="match status" value="1"/>
</dbReference>
<dbReference type="SFLD" id="SFLDG01072">
    <property type="entry name" value="dehydrogenase_like"/>
    <property type="match status" value="1"/>
</dbReference>
<dbReference type="SMART" id="SM00729">
    <property type="entry name" value="Elp3"/>
    <property type="match status" value="1"/>
</dbReference>
<dbReference type="SUPFAM" id="SSF102114">
    <property type="entry name" value="Radical SAM enzymes"/>
    <property type="match status" value="1"/>
</dbReference>
<dbReference type="PROSITE" id="PS01305">
    <property type="entry name" value="MOAA_NIFB_PQQE"/>
    <property type="match status" value="1"/>
</dbReference>
<dbReference type="PROSITE" id="PS51918">
    <property type="entry name" value="RADICAL_SAM"/>
    <property type="match status" value="1"/>
</dbReference>
<reference key="1">
    <citation type="submission" date="2006-12" db="EMBL/GenBank/DDBJ databases">
        <title>Complete sequence of chromosome 1 of Paracoccus denitrificans PD1222.</title>
        <authorList>
            <person name="Copeland A."/>
            <person name="Lucas S."/>
            <person name="Lapidus A."/>
            <person name="Barry K."/>
            <person name="Detter J.C."/>
            <person name="Glavina del Rio T."/>
            <person name="Hammon N."/>
            <person name="Israni S."/>
            <person name="Dalin E."/>
            <person name="Tice H."/>
            <person name="Pitluck S."/>
            <person name="Munk A.C."/>
            <person name="Brettin T."/>
            <person name="Bruce D."/>
            <person name="Han C."/>
            <person name="Tapia R."/>
            <person name="Gilna P."/>
            <person name="Schmutz J."/>
            <person name="Larimer F."/>
            <person name="Land M."/>
            <person name="Hauser L."/>
            <person name="Kyrpides N."/>
            <person name="Lykidis A."/>
            <person name="Spiro S."/>
            <person name="Richardson D.J."/>
            <person name="Moir J.W.B."/>
            <person name="Ferguson S.J."/>
            <person name="van Spanning R.J.M."/>
            <person name="Richardson P."/>
        </authorList>
    </citation>
    <scope>NUCLEOTIDE SEQUENCE [LARGE SCALE GENOMIC DNA]</scope>
    <source>
        <strain>Pd 1222</strain>
    </source>
</reference>